<keyword id="KW-0143">Chaperone</keyword>
<keyword id="KW-0963">Cytoplasm</keyword>
<keyword id="KW-1185">Reference proteome</keyword>
<accession>Q5L3E7</accession>
<dbReference type="EMBL" id="BA000043">
    <property type="protein sequence ID" value="BAD74533.1"/>
    <property type="molecule type" value="Genomic_DNA"/>
</dbReference>
<dbReference type="SMR" id="Q5L3E7"/>
<dbReference type="STRING" id="235909.GK0248"/>
<dbReference type="KEGG" id="gka:GK0248"/>
<dbReference type="eggNOG" id="COG0234">
    <property type="taxonomic scope" value="Bacteria"/>
</dbReference>
<dbReference type="HOGENOM" id="CLU_132825_2_0_9"/>
<dbReference type="Proteomes" id="UP000001172">
    <property type="component" value="Chromosome"/>
</dbReference>
<dbReference type="GO" id="GO:0005737">
    <property type="term" value="C:cytoplasm"/>
    <property type="evidence" value="ECO:0007669"/>
    <property type="project" value="UniProtKB-SubCell"/>
</dbReference>
<dbReference type="GO" id="GO:0005524">
    <property type="term" value="F:ATP binding"/>
    <property type="evidence" value="ECO:0007669"/>
    <property type="project" value="InterPro"/>
</dbReference>
<dbReference type="GO" id="GO:0046872">
    <property type="term" value="F:metal ion binding"/>
    <property type="evidence" value="ECO:0007669"/>
    <property type="project" value="TreeGrafter"/>
</dbReference>
<dbReference type="GO" id="GO:0044183">
    <property type="term" value="F:protein folding chaperone"/>
    <property type="evidence" value="ECO:0007669"/>
    <property type="project" value="InterPro"/>
</dbReference>
<dbReference type="GO" id="GO:0051087">
    <property type="term" value="F:protein-folding chaperone binding"/>
    <property type="evidence" value="ECO:0007669"/>
    <property type="project" value="TreeGrafter"/>
</dbReference>
<dbReference type="GO" id="GO:0051082">
    <property type="term" value="F:unfolded protein binding"/>
    <property type="evidence" value="ECO:0007669"/>
    <property type="project" value="TreeGrafter"/>
</dbReference>
<dbReference type="GO" id="GO:0051085">
    <property type="term" value="P:chaperone cofactor-dependent protein refolding"/>
    <property type="evidence" value="ECO:0007669"/>
    <property type="project" value="TreeGrafter"/>
</dbReference>
<dbReference type="CDD" id="cd00320">
    <property type="entry name" value="cpn10"/>
    <property type="match status" value="1"/>
</dbReference>
<dbReference type="FunFam" id="2.30.33.40:FF:000001">
    <property type="entry name" value="10 kDa chaperonin"/>
    <property type="match status" value="1"/>
</dbReference>
<dbReference type="Gene3D" id="2.30.33.40">
    <property type="entry name" value="GroES chaperonin"/>
    <property type="match status" value="1"/>
</dbReference>
<dbReference type="HAMAP" id="MF_00580">
    <property type="entry name" value="CH10"/>
    <property type="match status" value="1"/>
</dbReference>
<dbReference type="InterPro" id="IPR020818">
    <property type="entry name" value="Chaperonin_GroES"/>
</dbReference>
<dbReference type="InterPro" id="IPR037124">
    <property type="entry name" value="Chaperonin_GroES_sf"/>
</dbReference>
<dbReference type="InterPro" id="IPR018369">
    <property type="entry name" value="Chaprnonin_Cpn10_CS"/>
</dbReference>
<dbReference type="InterPro" id="IPR011032">
    <property type="entry name" value="GroES-like_sf"/>
</dbReference>
<dbReference type="NCBIfam" id="NF001527">
    <property type="entry name" value="PRK00364.1-2"/>
    <property type="match status" value="1"/>
</dbReference>
<dbReference type="NCBIfam" id="NF001530">
    <property type="entry name" value="PRK00364.1-6"/>
    <property type="match status" value="1"/>
</dbReference>
<dbReference type="NCBIfam" id="NF001531">
    <property type="entry name" value="PRK00364.2-2"/>
    <property type="match status" value="1"/>
</dbReference>
<dbReference type="NCBIfam" id="NF001532">
    <property type="entry name" value="PRK00364.2-3"/>
    <property type="match status" value="1"/>
</dbReference>
<dbReference type="NCBIfam" id="NF001533">
    <property type="entry name" value="PRK00364.2-4"/>
    <property type="match status" value="1"/>
</dbReference>
<dbReference type="NCBIfam" id="NF001534">
    <property type="entry name" value="PRK00364.2-5"/>
    <property type="match status" value="1"/>
</dbReference>
<dbReference type="PANTHER" id="PTHR10772">
    <property type="entry name" value="10 KDA HEAT SHOCK PROTEIN"/>
    <property type="match status" value="1"/>
</dbReference>
<dbReference type="PANTHER" id="PTHR10772:SF58">
    <property type="entry name" value="CO-CHAPERONIN GROES"/>
    <property type="match status" value="1"/>
</dbReference>
<dbReference type="Pfam" id="PF00166">
    <property type="entry name" value="Cpn10"/>
    <property type="match status" value="1"/>
</dbReference>
<dbReference type="PRINTS" id="PR00297">
    <property type="entry name" value="CHAPERONIN10"/>
</dbReference>
<dbReference type="SMART" id="SM00883">
    <property type="entry name" value="Cpn10"/>
    <property type="match status" value="1"/>
</dbReference>
<dbReference type="SUPFAM" id="SSF50129">
    <property type="entry name" value="GroES-like"/>
    <property type="match status" value="1"/>
</dbReference>
<dbReference type="PROSITE" id="PS00681">
    <property type="entry name" value="CHAPERONINS_CPN10"/>
    <property type="match status" value="1"/>
</dbReference>
<protein>
    <recommendedName>
        <fullName evidence="1">Co-chaperonin GroES</fullName>
    </recommendedName>
    <alternativeName>
        <fullName evidence="1">10 kDa chaperonin</fullName>
    </alternativeName>
    <alternativeName>
        <fullName evidence="1">Chaperonin-10</fullName>
        <shortName evidence="1">Cpn10</shortName>
    </alternativeName>
</protein>
<evidence type="ECO:0000255" key="1">
    <source>
        <dbReference type="HAMAP-Rule" id="MF_00580"/>
    </source>
</evidence>
<feature type="chain" id="PRO_0000174758" description="Co-chaperonin GroES">
    <location>
        <begin position="1"/>
        <end position="93"/>
    </location>
</feature>
<organism>
    <name type="scientific">Geobacillus kaustophilus (strain HTA426)</name>
    <dbReference type="NCBI Taxonomy" id="235909"/>
    <lineage>
        <taxon>Bacteria</taxon>
        <taxon>Bacillati</taxon>
        <taxon>Bacillota</taxon>
        <taxon>Bacilli</taxon>
        <taxon>Bacillales</taxon>
        <taxon>Anoxybacillaceae</taxon>
        <taxon>Geobacillus</taxon>
        <taxon>Geobacillus thermoleovorans group</taxon>
    </lineage>
</organism>
<name>CH10_GEOKA</name>
<sequence>MKPLGDRIVIEVVETEEKTASGIVLPDTAKEKPQEGRVVAVGAGRVLDNGQRIAPEVEVGDRIIFSKYAGTEVKYDGKEYLILRESDILAVIR</sequence>
<reference key="1">
    <citation type="journal article" date="2004" name="Nucleic Acids Res.">
        <title>Thermoadaptation trait revealed by the genome sequence of thermophilic Geobacillus kaustophilus.</title>
        <authorList>
            <person name="Takami H."/>
            <person name="Takaki Y."/>
            <person name="Chee G.-J."/>
            <person name="Nishi S."/>
            <person name="Shimamura S."/>
            <person name="Suzuki H."/>
            <person name="Matsui S."/>
            <person name="Uchiyama I."/>
        </authorList>
    </citation>
    <scope>NUCLEOTIDE SEQUENCE [LARGE SCALE GENOMIC DNA]</scope>
    <source>
        <strain>HTA426</strain>
    </source>
</reference>
<proteinExistence type="inferred from homology"/>
<comment type="function">
    <text evidence="1">Together with the chaperonin GroEL, plays an essential role in assisting protein folding. The GroEL-GroES system forms a nano-cage that allows encapsulation of the non-native substrate proteins and provides a physical environment optimized to promote and accelerate protein folding. GroES binds to the apical surface of the GroEL ring, thereby capping the opening of the GroEL channel.</text>
</comment>
<comment type="subunit">
    <text evidence="1">Heptamer of 7 subunits arranged in a ring. Interacts with the chaperonin GroEL.</text>
</comment>
<comment type="subcellular location">
    <subcellularLocation>
        <location evidence="1">Cytoplasm</location>
    </subcellularLocation>
</comment>
<comment type="similarity">
    <text evidence="1">Belongs to the GroES chaperonin family.</text>
</comment>
<gene>
    <name evidence="1" type="primary">groES</name>
    <name evidence="1" type="synonym">groS</name>
    <name type="ordered locus">GK0248</name>
</gene>